<gene>
    <name evidence="6" type="primary">PIMMS43</name>
    <name evidence="7" type="ORF">PF3D7_0620000</name>
</gene>
<accession>C6KT40</accession>
<reference evidence="8" key="1">
    <citation type="journal article" date="2002" name="Nature">
        <title>Genome sequence of the human malaria parasite Plasmodium falciparum.</title>
        <authorList>
            <person name="Gardner M.J."/>
            <person name="Hall N."/>
            <person name="Fung E."/>
            <person name="White O."/>
            <person name="Berriman M."/>
            <person name="Hyman R.W."/>
            <person name="Carlton J.M."/>
            <person name="Pain A."/>
            <person name="Nelson K.E."/>
            <person name="Bowman S."/>
            <person name="Paulsen I.T."/>
            <person name="James K.D."/>
            <person name="Eisen J.A."/>
            <person name="Rutherford K.M."/>
            <person name="Salzberg S.L."/>
            <person name="Craig A."/>
            <person name="Kyes S."/>
            <person name="Chan M.-S."/>
            <person name="Nene V."/>
            <person name="Shallom S.J."/>
            <person name="Suh B."/>
            <person name="Peterson J."/>
            <person name="Angiuoli S."/>
            <person name="Pertea M."/>
            <person name="Allen J."/>
            <person name="Selengut J."/>
            <person name="Haft D."/>
            <person name="Mather M.W."/>
            <person name="Vaidya A.B."/>
            <person name="Martin D.M.A."/>
            <person name="Fairlamb A.H."/>
            <person name="Fraunholz M.J."/>
            <person name="Roos D.S."/>
            <person name="Ralph S.A."/>
            <person name="McFadden G.I."/>
            <person name="Cummings L.M."/>
            <person name="Subramanian G.M."/>
            <person name="Mungall C."/>
            <person name="Venter J.C."/>
            <person name="Carucci D.J."/>
            <person name="Hoffman S.L."/>
            <person name="Newbold C."/>
            <person name="Davis R.W."/>
            <person name="Fraser C.M."/>
            <person name="Barrell B.G."/>
        </authorList>
    </citation>
    <scope>NUCLEOTIDE SEQUENCE [LARGE SCALE GENOMIC DNA]</scope>
    <source>
        <strain evidence="8">3D7</strain>
    </source>
</reference>
<reference evidence="8" key="2">
    <citation type="journal article" date="2002" name="Nature">
        <title>Sequence of Plasmodium falciparum chromosomes 1, 3-9 and 13.</title>
        <authorList>
            <person name="Hall N."/>
            <person name="Pain A."/>
            <person name="Berriman M."/>
            <person name="Churcher C.M."/>
            <person name="Harris B."/>
            <person name="Harris D."/>
            <person name="Mungall K.L."/>
            <person name="Bowman S."/>
            <person name="Atkin R."/>
            <person name="Baker S."/>
            <person name="Barron A."/>
            <person name="Brooks K."/>
            <person name="Buckee C.O."/>
            <person name="Burrows C."/>
            <person name="Cherevach I."/>
            <person name="Chillingworth C."/>
            <person name="Chillingworth T."/>
            <person name="Christodoulou Z."/>
            <person name="Clark L."/>
            <person name="Clark R."/>
            <person name="Corton C."/>
            <person name="Cronin A."/>
            <person name="Davies R.M."/>
            <person name="Davis P."/>
            <person name="Dear P."/>
            <person name="Dearden F."/>
            <person name="Doggett J."/>
            <person name="Feltwell T."/>
            <person name="Goble A."/>
            <person name="Goodhead I."/>
            <person name="Gwilliam R."/>
            <person name="Hamlin N."/>
            <person name="Hance Z."/>
            <person name="Harper D."/>
            <person name="Hauser H."/>
            <person name="Hornsby T."/>
            <person name="Holroyd S."/>
            <person name="Horrocks P."/>
            <person name="Humphray S."/>
            <person name="Jagels K."/>
            <person name="James K.D."/>
            <person name="Johnson D."/>
            <person name="Kerhornou A."/>
            <person name="Knights A."/>
            <person name="Konfortov B."/>
            <person name="Kyes S."/>
            <person name="Larke N."/>
            <person name="Lawson D."/>
            <person name="Lennard N."/>
            <person name="Line A."/>
            <person name="Maddison M."/>
            <person name="Mclean J."/>
            <person name="Mooney P."/>
            <person name="Moule S."/>
            <person name="Murphy L."/>
            <person name="Oliver K."/>
            <person name="Ormond D."/>
            <person name="Price C."/>
            <person name="Quail M.A."/>
            <person name="Rabbinowitsch E."/>
            <person name="Rajandream M.A."/>
            <person name="Rutter S."/>
            <person name="Rutherford K.M."/>
            <person name="Sanders M."/>
            <person name="Simmonds M."/>
            <person name="Seeger K."/>
            <person name="Sharp S."/>
            <person name="Smith R."/>
            <person name="Squares R."/>
            <person name="Squares S."/>
            <person name="Stevens K."/>
            <person name="Taylor K."/>
            <person name="Tivey A."/>
            <person name="Unwin L."/>
            <person name="Whitehead S."/>
            <person name="Woodward J.R."/>
            <person name="Sulston J.E."/>
            <person name="Craig A."/>
            <person name="Newbold C."/>
            <person name="Barrell B.G."/>
        </authorList>
    </citation>
    <scope>NUCLEOTIDE SEQUENCE [LARGE SCALE GENOMIC DNA]</scope>
    <source>
        <strain evidence="8">3D7</strain>
    </source>
</reference>
<reference evidence="6" key="3">
    <citation type="journal article" date="2020" name="Proc. Natl. Acad. Sci. U.S.A.">
        <title>PIMMS43 is required for malaria parasite immune evasion and sporogonic development in the mosquito vector.</title>
        <authorList>
            <person name="Ukegbu C.V."/>
            <person name="Giorgalli M."/>
            <person name="Tapanelli S."/>
            <person name="Rona L.D.P."/>
            <person name="Jaye A."/>
            <person name="Wyer C."/>
            <person name="Angrisano F."/>
            <person name="Blagborough A.M."/>
            <person name="Christophides G.K."/>
            <person name="Vlachou D."/>
        </authorList>
    </citation>
    <scope>SUBUNIT</scope>
    <scope>SUBCELLULAR LOCATION</scope>
    <scope>DEVELOPMENTAL STAGE</scope>
    <scope>POLYMORPHISM</scope>
    <scope>VARIANTS LEU-217 AND LYS-225</scope>
    <source>
        <strain evidence="5">NF54</strain>
    </source>
</reference>
<proteinExistence type="evidence at protein level"/>
<feature type="signal peptide" evidence="2">
    <location>
        <begin position="1"/>
        <end position="24"/>
    </location>
</feature>
<feature type="chain" id="PRO_5014109689" description="Ookinete surface protein PIMMS43" evidence="2">
    <location>
        <begin position="25"/>
        <end position="505"/>
    </location>
</feature>
<feature type="transmembrane region" description="Helical" evidence="2">
    <location>
        <begin position="485"/>
        <end position="505"/>
    </location>
</feature>
<feature type="region of interest" description="Disordered" evidence="3">
    <location>
        <begin position="188"/>
        <end position="221"/>
    </location>
</feature>
<feature type="sequence variant" description="Prevalent in Kenyan and Tanzanian populations." evidence="4">
    <original>S</original>
    <variation>L</variation>
    <location>
        <position position="217"/>
    </location>
</feature>
<feature type="sequence variant" description="Prevalent in Ugandan populations." evidence="4">
    <original>E</original>
    <variation>K</variation>
    <location>
        <position position="225"/>
    </location>
</feature>
<comment type="function">
    <text evidence="1">Involved in ookinete evasion of the mosquito complement-like response, oocyst maturation, sporozoite development and infectivity.</text>
</comment>
<comment type="subunit">
    <text evidence="1 4">Monomer (PubMed:32165544). May form multimers with an unknown protein(s) (By similarity).</text>
</comment>
<comment type="subcellular location">
    <subcellularLocation>
        <location evidence="4">Membrane</location>
        <topology evidence="2">Single-pass membrane protein</topology>
        <orientation evidence="4">Extracellular side</orientation>
    </subcellularLocation>
    <text evidence="4">Localizes on the surface of female gametes or early-stage zygotes found in the mosquito blood bolus 1 hour post blood feeding (hpbf), as well as on the surface of ookinetes traversing the mosquito midgut epithelia and sporozoites found in the mosquito salivary gland lumen at 25 hpbf and 16 days post blood feeding (dpbf), respectively.</text>
</comment>
<comment type="developmental stage">
    <text evidence="4">Expressed in female gametes, early-stage zygotes, ookinetes and sporozoites found in the mosquito salivary gland lumen (at protein level) (PubMed:32165544). Not detected in in vitro-cultured asexual blood stage or gametocytes (at protein level) (PubMed:32165544). Transcription begins in gametocytes and peaks in zygotes and ookinetes. Expression declines in oocysts but reappears in sporozoites from mosquito salivary glands (PubMed:32165544). Not detected in in vitro-cultured asexual blood stage parasites (PubMed:32165544).</text>
</comment>
<comment type="polymorphism">
    <text evidence="4 5">Analysis of single nucleotide polymorphisms revealed significant population differentiation, mostly between populations of some West or Central and East African countries (PubMed:32165544). Differences in PIMMS43 may represent an adaptation of African malaria parasite populations for transmission by different mosquito vectors that are also differentially distributed across the continent (PubMed:32165544).</text>
</comment>
<comment type="miscellaneous">
    <text evidence="4">Addition of antibodies against PIMMS43 to the infectious blood meal significantly reduces transmission of malaria parasites by A.coluzzii mosquitoes.</text>
</comment>
<evidence type="ECO:0000250" key="1">
    <source>
        <dbReference type="UniProtKB" id="A0A509AM61"/>
    </source>
</evidence>
<evidence type="ECO:0000255" key="2"/>
<evidence type="ECO:0000256" key="3">
    <source>
        <dbReference type="SAM" id="MobiDB-lite"/>
    </source>
</evidence>
<evidence type="ECO:0000269" key="4">
    <source>
    </source>
</evidence>
<evidence type="ECO:0000303" key="5">
    <source>
    </source>
</evidence>
<evidence type="ECO:0000305" key="6"/>
<evidence type="ECO:0000312" key="7">
    <source>
        <dbReference type="EMBL" id="CAG25016.1"/>
    </source>
</evidence>
<evidence type="ECO:0000312" key="8">
    <source>
        <dbReference type="Proteomes" id="UP000001450"/>
    </source>
</evidence>
<dbReference type="EMBL" id="AL844505">
    <property type="protein sequence ID" value="CAG25016.1"/>
    <property type="molecule type" value="Genomic_DNA"/>
</dbReference>
<dbReference type="RefSeq" id="XP_966186.1">
    <property type="nucleotide sequence ID" value="XM_961093.1"/>
</dbReference>
<dbReference type="SMR" id="C6KT40"/>
<dbReference type="FunCoup" id="C6KT40">
    <property type="interactions" value="469"/>
</dbReference>
<dbReference type="PaxDb" id="5833-PFF0975c"/>
<dbReference type="EnsemblProtists" id="CAG25016">
    <property type="protein sequence ID" value="CAG25016"/>
    <property type="gene ID" value="PF3D7_0620000"/>
</dbReference>
<dbReference type="GeneID" id="3885949"/>
<dbReference type="KEGG" id="pfa:PF3D7_0620000"/>
<dbReference type="VEuPathDB" id="PlasmoDB:PF3D7_0620000"/>
<dbReference type="HOGENOM" id="CLU_540244_0_0_1"/>
<dbReference type="InParanoid" id="C6KT40"/>
<dbReference type="OMA" id="SKDMAAC"/>
<dbReference type="OrthoDB" id="371938at2759"/>
<dbReference type="PhylomeDB" id="C6KT40"/>
<dbReference type="Proteomes" id="UP000001450">
    <property type="component" value="Chromosome 6"/>
</dbReference>
<dbReference type="GO" id="GO:0016020">
    <property type="term" value="C:membrane"/>
    <property type="evidence" value="ECO:0007669"/>
    <property type="project" value="UniProtKB-SubCell"/>
</dbReference>
<sequence>MQKRIYVSLFFLVFFLSKISVVLSKDDGQRHGEDSDSMNKYNYIYRPNADNGIHNNLRPSSYIDMEHIAKGRDNTSGLRENELFDIQNDENSNMGPDQEKVITLSDKIYIDKIKNIIEYRKWRAKSKYRSPAKQPEEDMFVEGYIPIKRRDDNLLPHEKAEKDFEEIIQKYVDLENKLQKQKELEEAERRKKKLDDEQKRQKDLEDTNRKENDEEQSYKKLEDLELENIDTKINNNDTYDVENGFNDDNKLYTKINKIVSQVSQNNELYVNIMKYITLVYTSHVDIKQDDFTNGSISIFLTFENPKMGNDLANINISFFASEQRTGTNEVAEARSNYLTNYNMNELLEDNASGRLLSQDEYIKELVKYNHSISSSNKENLKNENYDVNMNISKILQYIIDNDINLVDNFITFNRTNEQEVTISKLDDFLHECSKVKPEDIKKDEIQKIIKTINKKEQIIKEVKNSLIKKDIEKCKLYTTILMFGSSIYSSIKYFFLLMLFVIYIL</sequence>
<organism evidence="8">
    <name type="scientific">Plasmodium falciparum (isolate 3D7)</name>
    <dbReference type="NCBI Taxonomy" id="36329"/>
    <lineage>
        <taxon>Eukaryota</taxon>
        <taxon>Sar</taxon>
        <taxon>Alveolata</taxon>
        <taxon>Apicomplexa</taxon>
        <taxon>Aconoidasida</taxon>
        <taxon>Haemosporida</taxon>
        <taxon>Plasmodiidae</taxon>
        <taxon>Plasmodium</taxon>
        <taxon>Plasmodium (Laverania)</taxon>
    </lineage>
</organism>
<protein>
    <recommendedName>
        <fullName evidence="6">Ookinete surface protein PIMMS43</fullName>
        <shortName evidence="5">PfPIMMS43</shortName>
    </recommendedName>
</protein>
<name>PFC43_PLAF7</name>
<keyword id="KW-0472">Membrane</keyword>
<keyword id="KW-1185">Reference proteome</keyword>
<keyword id="KW-0732">Signal</keyword>
<keyword id="KW-0812">Transmembrane</keyword>
<keyword id="KW-1133">Transmembrane helix</keyword>